<accession>Q71YM4</accession>
<organism>
    <name type="scientific">Listeria monocytogenes serotype 4b (strain F2365)</name>
    <dbReference type="NCBI Taxonomy" id="265669"/>
    <lineage>
        <taxon>Bacteria</taxon>
        <taxon>Bacillati</taxon>
        <taxon>Bacillota</taxon>
        <taxon>Bacilli</taxon>
        <taxon>Bacillales</taxon>
        <taxon>Listeriaceae</taxon>
        <taxon>Listeria</taxon>
    </lineage>
</organism>
<dbReference type="EC" id="2.1.1.228" evidence="1"/>
<dbReference type="EMBL" id="AE017262">
    <property type="protein sequence ID" value="AAT04590.1"/>
    <property type="molecule type" value="Genomic_DNA"/>
</dbReference>
<dbReference type="RefSeq" id="WP_003726803.1">
    <property type="nucleotide sequence ID" value="NC_002973.6"/>
</dbReference>
<dbReference type="SMR" id="Q71YM4"/>
<dbReference type="KEGG" id="lmf:LMOf2365_1819"/>
<dbReference type="HOGENOM" id="CLU_047363_0_1_9"/>
<dbReference type="GO" id="GO:0005829">
    <property type="term" value="C:cytosol"/>
    <property type="evidence" value="ECO:0007669"/>
    <property type="project" value="TreeGrafter"/>
</dbReference>
<dbReference type="GO" id="GO:0052906">
    <property type="term" value="F:tRNA (guanine(37)-N1)-methyltransferase activity"/>
    <property type="evidence" value="ECO:0007669"/>
    <property type="project" value="UniProtKB-UniRule"/>
</dbReference>
<dbReference type="GO" id="GO:0002939">
    <property type="term" value="P:tRNA N1-guanine methylation"/>
    <property type="evidence" value="ECO:0007669"/>
    <property type="project" value="TreeGrafter"/>
</dbReference>
<dbReference type="CDD" id="cd18080">
    <property type="entry name" value="TrmD-like"/>
    <property type="match status" value="1"/>
</dbReference>
<dbReference type="FunFam" id="1.10.1270.20:FF:000001">
    <property type="entry name" value="tRNA (guanine-N(1)-)-methyltransferase"/>
    <property type="match status" value="1"/>
</dbReference>
<dbReference type="FunFam" id="3.40.1280.10:FF:000001">
    <property type="entry name" value="tRNA (guanine-N(1)-)-methyltransferase"/>
    <property type="match status" value="1"/>
</dbReference>
<dbReference type="Gene3D" id="3.40.1280.10">
    <property type="match status" value="1"/>
</dbReference>
<dbReference type="Gene3D" id="1.10.1270.20">
    <property type="entry name" value="tRNA(m1g37)methyltransferase, domain 2"/>
    <property type="match status" value="1"/>
</dbReference>
<dbReference type="HAMAP" id="MF_00605">
    <property type="entry name" value="TrmD"/>
    <property type="match status" value="1"/>
</dbReference>
<dbReference type="InterPro" id="IPR029028">
    <property type="entry name" value="Alpha/beta_knot_MTases"/>
</dbReference>
<dbReference type="InterPro" id="IPR023148">
    <property type="entry name" value="tRNA_m1G_MeTrfase_C_sf"/>
</dbReference>
<dbReference type="InterPro" id="IPR002649">
    <property type="entry name" value="tRNA_m1G_MeTrfase_TrmD"/>
</dbReference>
<dbReference type="InterPro" id="IPR029026">
    <property type="entry name" value="tRNA_m1G_MTases_N"/>
</dbReference>
<dbReference type="InterPro" id="IPR016009">
    <property type="entry name" value="tRNA_MeTrfase_TRMD/TRM10"/>
</dbReference>
<dbReference type="NCBIfam" id="NF000648">
    <property type="entry name" value="PRK00026.1"/>
    <property type="match status" value="1"/>
</dbReference>
<dbReference type="NCBIfam" id="TIGR00088">
    <property type="entry name" value="trmD"/>
    <property type="match status" value="1"/>
</dbReference>
<dbReference type="PANTHER" id="PTHR46417">
    <property type="entry name" value="TRNA (GUANINE-N(1)-)-METHYLTRANSFERASE"/>
    <property type="match status" value="1"/>
</dbReference>
<dbReference type="PANTHER" id="PTHR46417:SF1">
    <property type="entry name" value="TRNA (GUANINE-N(1)-)-METHYLTRANSFERASE"/>
    <property type="match status" value="1"/>
</dbReference>
<dbReference type="Pfam" id="PF01746">
    <property type="entry name" value="tRNA_m1G_MT"/>
    <property type="match status" value="1"/>
</dbReference>
<dbReference type="PIRSF" id="PIRSF000386">
    <property type="entry name" value="tRNA_mtase"/>
    <property type="match status" value="1"/>
</dbReference>
<dbReference type="SUPFAM" id="SSF75217">
    <property type="entry name" value="alpha/beta knot"/>
    <property type="match status" value="1"/>
</dbReference>
<protein>
    <recommendedName>
        <fullName evidence="1">tRNA (guanine-N(1)-)-methyltransferase</fullName>
        <ecNumber evidence="1">2.1.1.228</ecNumber>
    </recommendedName>
    <alternativeName>
        <fullName evidence="1">M1G-methyltransferase</fullName>
    </alternativeName>
    <alternativeName>
        <fullName evidence="1">tRNA [GM37] methyltransferase</fullName>
    </alternativeName>
</protein>
<evidence type="ECO:0000255" key="1">
    <source>
        <dbReference type="HAMAP-Rule" id="MF_00605"/>
    </source>
</evidence>
<name>TRMD_LISMF</name>
<comment type="function">
    <text evidence="1">Specifically methylates guanosine-37 in various tRNAs.</text>
</comment>
<comment type="catalytic activity">
    <reaction evidence="1">
        <text>guanosine(37) in tRNA + S-adenosyl-L-methionine = N(1)-methylguanosine(37) in tRNA + S-adenosyl-L-homocysteine + H(+)</text>
        <dbReference type="Rhea" id="RHEA:36899"/>
        <dbReference type="Rhea" id="RHEA-COMP:10145"/>
        <dbReference type="Rhea" id="RHEA-COMP:10147"/>
        <dbReference type="ChEBI" id="CHEBI:15378"/>
        <dbReference type="ChEBI" id="CHEBI:57856"/>
        <dbReference type="ChEBI" id="CHEBI:59789"/>
        <dbReference type="ChEBI" id="CHEBI:73542"/>
        <dbReference type="ChEBI" id="CHEBI:74269"/>
        <dbReference type="EC" id="2.1.1.228"/>
    </reaction>
</comment>
<comment type="subunit">
    <text evidence="1">Homodimer.</text>
</comment>
<comment type="subcellular location">
    <subcellularLocation>
        <location evidence="1">Cytoplasm</location>
    </subcellularLocation>
</comment>
<comment type="similarity">
    <text evidence="1">Belongs to the RNA methyltransferase TrmD family.</text>
</comment>
<reference key="1">
    <citation type="journal article" date="2004" name="Nucleic Acids Res.">
        <title>Whole genome comparisons of serotype 4b and 1/2a strains of the food-borne pathogen Listeria monocytogenes reveal new insights into the core genome components of this species.</title>
        <authorList>
            <person name="Nelson K.E."/>
            <person name="Fouts D.E."/>
            <person name="Mongodin E.F."/>
            <person name="Ravel J."/>
            <person name="DeBoy R.T."/>
            <person name="Kolonay J.F."/>
            <person name="Rasko D.A."/>
            <person name="Angiuoli S.V."/>
            <person name="Gill S.R."/>
            <person name="Paulsen I.T."/>
            <person name="Peterson J.D."/>
            <person name="White O."/>
            <person name="Nelson W.C."/>
            <person name="Nierman W.C."/>
            <person name="Beanan M.J."/>
            <person name="Brinkac L.M."/>
            <person name="Daugherty S.C."/>
            <person name="Dodson R.J."/>
            <person name="Durkin A.S."/>
            <person name="Madupu R."/>
            <person name="Haft D.H."/>
            <person name="Selengut J."/>
            <person name="Van Aken S.E."/>
            <person name="Khouri H.M."/>
            <person name="Fedorova N."/>
            <person name="Forberger H.A."/>
            <person name="Tran B."/>
            <person name="Kathariou S."/>
            <person name="Wonderling L.D."/>
            <person name="Uhlich G.A."/>
            <person name="Bayles D.O."/>
            <person name="Luchansky J.B."/>
            <person name="Fraser C.M."/>
        </authorList>
    </citation>
    <scope>NUCLEOTIDE SEQUENCE [LARGE SCALE GENOMIC DNA]</scope>
    <source>
        <strain>F2365</strain>
    </source>
</reference>
<keyword id="KW-0963">Cytoplasm</keyword>
<keyword id="KW-0489">Methyltransferase</keyword>
<keyword id="KW-0949">S-adenosyl-L-methionine</keyword>
<keyword id="KW-0808">Transferase</keyword>
<keyword id="KW-0819">tRNA processing</keyword>
<feature type="chain" id="PRO_0000060403" description="tRNA (guanine-N(1)-)-methyltransferase">
    <location>
        <begin position="1"/>
        <end position="245"/>
    </location>
</feature>
<feature type="binding site" evidence="1">
    <location>
        <position position="114"/>
    </location>
    <ligand>
        <name>S-adenosyl-L-methionine</name>
        <dbReference type="ChEBI" id="CHEBI:59789"/>
    </ligand>
</feature>
<feature type="binding site" evidence="1">
    <location>
        <begin position="134"/>
        <end position="139"/>
    </location>
    <ligand>
        <name>S-adenosyl-L-methionine</name>
        <dbReference type="ChEBI" id="CHEBI:59789"/>
    </ligand>
</feature>
<gene>
    <name evidence="1" type="primary">trmD</name>
    <name type="ordered locus">LMOf2365_1819</name>
</gene>
<proteinExistence type="inferred from homology"/>
<sequence length="245" mass="27929">MKIDILSIFPDMFSGVTGNSIIKKAIENERVAVEVTDFREYAEGKHHIVDDYPYGGGAGMLLKAQPIFDAVQAVKEKQPETKPRVILMDPAGKRFDQKMAEEFAEEEHLVFICGHYEGYDERIREHLVTDEVSIGDYILTGGEIGAMIVMDSVIRLLPGVLGNKDSAVTDSFSTGLLEHPHYTRPADFRGMKVPDILLSGNHAWIEEWRDKESLKRTYERRPDLLKNYPLTDKQKTWLKEWSDSK</sequence>